<organism>
    <name type="scientific">Mus musculus</name>
    <name type="common">Mouse</name>
    <dbReference type="NCBI Taxonomy" id="10090"/>
    <lineage>
        <taxon>Eukaryota</taxon>
        <taxon>Metazoa</taxon>
        <taxon>Chordata</taxon>
        <taxon>Craniata</taxon>
        <taxon>Vertebrata</taxon>
        <taxon>Euteleostomi</taxon>
        <taxon>Mammalia</taxon>
        <taxon>Eutheria</taxon>
        <taxon>Euarchontoglires</taxon>
        <taxon>Glires</taxon>
        <taxon>Rodentia</taxon>
        <taxon>Myomorpha</taxon>
        <taxon>Muroidea</taxon>
        <taxon>Muridae</taxon>
        <taxon>Murinae</taxon>
        <taxon>Mus</taxon>
        <taxon>Mus</taxon>
    </lineage>
</organism>
<evidence type="ECO:0000250" key="1"/>
<evidence type="ECO:0000250" key="2">
    <source>
        <dbReference type="UniProtKB" id="Q8N3Z6"/>
    </source>
</evidence>
<evidence type="ECO:0000255" key="3">
    <source>
        <dbReference type="PROSITE-ProRule" id="PRU00047"/>
    </source>
</evidence>
<evidence type="ECO:0000256" key="4">
    <source>
        <dbReference type="SAM" id="MobiDB-lite"/>
    </source>
</evidence>
<evidence type="ECO:0000303" key="5">
    <source>
    </source>
</evidence>
<evidence type="ECO:0000303" key="6">
    <source>
    </source>
</evidence>
<evidence type="ECO:0000305" key="7"/>
<name>ZCHC7_MOUSE</name>
<protein>
    <recommendedName>
        <fullName>Zinc finger CCHC domain-containing protein 7</fullName>
    </recommendedName>
    <alternativeName>
        <fullName>TRAMP-like complex RNA-binding factor ZCCHC7</fullName>
    </alternativeName>
</protein>
<proteinExistence type="evidence at transcript level"/>
<dbReference type="EMBL" id="AK013175">
    <property type="protein sequence ID" value="BAB28692.1"/>
    <property type="molecule type" value="mRNA"/>
</dbReference>
<dbReference type="EMBL" id="AK043238">
    <property type="protein sequence ID" value="BAC31499.1"/>
    <property type="status" value="ALT_SEQ"/>
    <property type="molecule type" value="mRNA"/>
</dbReference>
<dbReference type="EMBL" id="AK050430">
    <property type="protein sequence ID" value="BAC34252.1"/>
    <property type="molecule type" value="mRNA"/>
</dbReference>
<dbReference type="EMBL" id="AK157728">
    <property type="protein sequence ID" value="BAE34173.1"/>
    <property type="status" value="ALT_SEQ"/>
    <property type="molecule type" value="mRNA"/>
</dbReference>
<dbReference type="EMBL" id="AL805896">
    <property type="status" value="NOT_ANNOTATED_CDS"/>
    <property type="molecule type" value="Genomic_DNA"/>
</dbReference>
<dbReference type="EMBL" id="AL805914">
    <property type="status" value="NOT_ANNOTATED_CDS"/>
    <property type="molecule type" value="Genomic_DNA"/>
</dbReference>
<dbReference type="EMBL" id="CH466565">
    <property type="protein sequence ID" value="EDL02416.1"/>
    <property type="molecule type" value="Genomic_DNA"/>
</dbReference>
<dbReference type="EMBL" id="CH466565">
    <property type="protein sequence ID" value="EDL02418.1"/>
    <property type="molecule type" value="Genomic_DNA"/>
</dbReference>
<dbReference type="EMBL" id="BC054405">
    <property type="protein sequence ID" value="AAH54405.1"/>
    <property type="molecule type" value="mRNA"/>
</dbReference>
<dbReference type="EMBL" id="BC117020">
    <property type="protein sequence ID" value="AAI17021.1"/>
    <property type="status" value="ALT_SEQ"/>
    <property type="molecule type" value="mRNA"/>
</dbReference>
<dbReference type="EMBL" id="BC117022">
    <property type="protein sequence ID" value="AAI17023.1"/>
    <property type="status" value="ALT_SEQ"/>
    <property type="molecule type" value="mRNA"/>
</dbReference>
<dbReference type="EMBL" id="BC144774">
    <property type="protein sequence ID" value="AAI44775.1"/>
    <property type="status" value="ALT_SEQ"/>
    <property type="molecule type" value="mRNA"/>
</dbReference>
<dbReference type="CCDS" id="CCDS18127.2">
    <molecule id="B1AX39-1"/>
</dbReference>
<dbReference type="RefSeq" id="NP_613056.2">
    <molecule id="B1AX39-1"/>
    <property type="nucleotide sequence ID" value="NM_138590.4"/>
</dbReference>
<dbReference type="RefSeq" id="XP_006538047.1">
    <molecule id="B1AX39-1"/>
    <property type="nucleotide sequence ID" value="XM_006537984.5"/>
</dbReference>
<dbReference type="BioGRID" id="235596">
    <property type="interactions" value="14"/>
</dbReference>
<dbReference type="FunCoup" id="B1AX39">
    <property type="interactions" value="3595"/>
</dbReference>
<dbReference type="STRING" id="10090.ENSMUSP00000103454"/>
<dbReference type="iPTMnet" id="B1AX39"/>
<dbReference type="PhosphoSitePlus" id="B1AX39"/>
<dbReference type="PaxDb" id="10090-ENSMUSP00000103454"/>
<dbReference type="PeptideAtlas" id="B1AX39"/>
<dbReference type="ProteomicsDB" id="302116">
    <molecule id="B1AX39-1"/>
</dbReference>
<dbReference type="ProteomicsDB" id="302117">
    <molecule id="B1AX39-3"/>
</dbReference>
<dbReference type="Pumba" id="B1AX39"/>
<dbReference type="Antibodypedia" id="11966">
    <property type="antibodies" value="88 antibodies from 18 providers"/>
</dbReference>
<dbReference type="DNASU" id="319885"/>
<dbReference type="Ensembl" id="ENSMUST00000107824.9">
    <molecule id="B1AX39-1"/>
    <property type="protein sequence ID" value="ENSMUSP00000103454.3"/>
    <property type="gene ID" value="ENSMUSG00000035649.18"/>
</dbReference>
<dbReference type="Ensembl" id="ENSMUST00000147272.8">
    <molecule id="B1AX39-3"/>
    <property type="protein sequence ID" value="ENSMUSP00000126678.2"/>
    <property type="gene ID" value="ENSMUSG00000035649.18"/>
</dbReference>
<dbReference type="GeneID" id="319885"/>
<dbReference type="KEGG" id="mmu:319885"/>
<dbReference type="UCSC" id="uc008sry.2">
    <molecule id="B1AX39-1"/>
    <property type="organism name" value="mouse"/>
</dbReference>
<dbReference type="UCSC" id="uc008ssa.2">
    <molecule id="B1AX39-3"/>
    <property type="organism name" value="mouse"/>
</dbReference>
<dbReference type="AGR" id="MGI:2442912"/>
<dbReference type="CTD" id="84186"/>
<dbReference type="MGI" id="MGI:2442912">
    <property type="gene designation" value="Zcchc7"/>
</dbReference>
<dbReference type="VEuPathDB" id="HostDB:ENSMUSG00000035649"/>
<dbReference type="eggNOG" id="KOG4400">
    <property type="taxonomic scope" value="Eukaryota"/>
</dbReference>
<dbReference type="GeneTree" id="ENSGT00950000183041"/>
<dbReference type="HOGENOM" id="CLU_029787_0_0_1"/>
<dbReference type="InParanoid" id="B1AX39"/>
<dbReference type="OMA" id="HFGHACI"/>
<dbReference type="OrthoDB" id="7608935at2759"/>
<dbReference type="PhylomeDB" id="B1AX39"/>
<dbReference type="TreeFam" id="TF329448"/>
<dbReference type="BioGRID-ORCS" id="319885">
    <property type="hits" value="10 hits in 76 CRISPR screens"/>
</dbReference>
<dbReference type="ChiTaRS" id="Zcchc7">
    <property type="organism name" value="mouse"/>
</dbReference>
<dbReference type="PRO" id="PR:B1AX39"/>
<dbReference type="Proteomes" id="UP000000589">
    <property type="component" value="Chromosome 4"/>
</dbReference>
<dbReference type="RNAct" id="B1AX39">
    <property type="molecule type" value="protein"/>
</dbReference>
<dbReference type="Bgee" id="ENSMUSG00000035649">
    <property type="expression patterns" value="Expressed in optic fissure and 273 other cell types or tissues"/>
</dbReference>
<dbReference type="ExpressionAtlas" id="B1AX39">
    <property type="expression patterns" value="baseline and differential"/>
</dbReference>
<dbReference type="GO" id="GO:0005829">
    <property type="term" value="C:cytosol"/>
    <property type="evidence" value="ECO:0007669"/>
    <property type="project" value="Ensembl"/>
</dbReference>
<dbReference type="GO" id="GO:0005730">
    <property type="term" value="C:nucleolus"/>
    <property type="evidence" value="ECO:0007669"/>
    <property type="project" value="UniProtKB-SubCell"/>
</dbReference>
<dbReference type="GO" id="GO:0003676">
    <property type="term" value="F:nucleic acid binding"/>
    <property type="evidence" value="ECO:0007669"/>
    <property type="project" value="InterPro"/>
</dbReference>
<dbReference type="GO" id="GO:0008270">
    <property type="term" value="F:zinc ion binding"/>
    <property type="evidence" value="ECO:0007669"/>
    <property type="project" value="UniProtKB-KW"/>
</dbReference>
<dbReference type="FunFam" id="4.10.60.10:FF:000020">
    <property type="entry name" value="Zinc finger CCHC domain-containing protein 7"/>
    <property type="match status" value="1"/>
</dbReference>
<dbReference type="FunFam" id="4.10.60.10:FF:000041">
    <property type="entry name" value="Zinc finger CCHC domain-containing protein 7"/>
    <property type="match status" value="1"/>
</dbReference>
<dbReference type="Gene3D" id="4.10.60.10">
    <property type="entry name" value="Zinc finger, CCHC-type"/>
    <property type="match status" value="2"/>
</dbReference>
<dbReference type="InterPro" id="IPR051644">
    <property type="entry name" value="TRAMP_AT-DNA-binding"/>
</dbReference>
<dbReference type="InterPro" id="IPR001878">
    <property type="entry name" value="Znf_CCHC"/>
</dbReference>
<dbReference type="InterPro" id="IPR036875">
    <property type="entry name" value="Znf_CCHC_sf"/>
</dbReference>
<dbReference type="PANTHER" id="PTHR46543">
    <property type="entry name" value="ZINC FINGER CCHC DOMAIN-CONTAINING PROTEIN 7"/>
    <property type="match status" value="1"/>
</dbReference>
<dbReference type="PANTHER" id="PTHR46543:SF1">
    <property type="entry name" value="ZINC FINGER CCHC DOMAIN-CONTAINING PROTEIN 7"/>
    <property type="match status" value="1"/>
</dbReference>
<dbReference type="Pfam" id="PF00098">
    <property type="entry name" value="zf-CCHC"/>
    <property type="match status" value="2"/>
</dbReference>
<dbReference type="SMART" id="SM00343">
    <property type="entry name" value="ZnF_C2HC"/>
    <property type="match status" value="4"/>
</dbReference>
<dbReference type="SUPFAM" id="SSF57756">
    <property type="entry name" value="Retrovirus zinc finger-like domains"/>
    <property type="match status" value="1"/>
</dbReference>
<dbReference type="PROSITE" id="PS50158">
    <property type="entry name" value="ZF_CCHC"/>
    <property type="match status" value="2"/>
</dbReference>
<sequence>MFGGYETIEAFEDDLYRDDSSSELSVDSEVEFQLYSQVHYAQSIHNANKEEGYEEKNCENSETVSSQPNQKNLIVLSDSEVIQLSDTSEVITLSDEDSIYRCKRKNIEVQAEEKTQSPATSHSNKVAQKCKRNNKKPKPEERPGVIREVMIIEVSSNEEEESTTSENENVESWMLLGSEEDGKDNDILLNLVGCETAGAEDDVNWFISDKDIEAKIDNNRSSGRWNNRYYSVNKNVTCRNCDKRGHLSKNCPLPQKVRACCLCSERGHLQYGCPARYCLDCSLPMSSNHRCFERLSWRKRCDRCDMIGHHADACPEIWRQYHLTTKPGPPKKPKTPSGQSALVYCYNCAQKGHYGHECTERRMFNQTFPTSPFIYCYDGKYDIQQRDRRIKRKVKDLKKNGDFPRQFKRPHVEETDKRRHHDMRKSRSPRKYRRWPRENKETQKEKTRSREGKTHRRGHQPRGEDEDFPRGSKPNASGCANNQKPSKSLHHASHYHRLREERLLRESKRSKPKKRKSTEDGSHDDLFLIKQKKKKPKPSGL</sequence>
<accession>B1AX39</accession>
<accession>Q3TZN5</accession>
<accession>Q8C915</accession>
<accession>Q9CYZ9</accession>
<gene>
    <name type="primary">Zcchc7</name>
    <name type="synonym">D4Wsu132e</name>
</gene>
<reference key="1">
    <citation type="journal article" date="2005" name="Science">
        <title>The transcriptional landscape of the mammalian genome.</title>
        <authorList>
            <person name="Carninci P."/>
            <person name="Kasukawa T."/>
            <person name="Katayama S."/>
            <person name="Gough J."/>
            <person name="Frith M.C."/>
            <person name="Maeda N."/>
            <person name="Oyama R."/>
            <person name="Ravasi T."/>
            <person name="Lenhard B."/>
            <person name="Wells C."/>
            <person name="Kodzius R."/>
            <person name="Shimokawa K."/>
            <person name="Bajic V.B."/>
            <person name="Brenner S.E."/>
            <person name="Batalov S."/>
            <person name="Forrest A.R."/>
            <person name="Zavolan M."/>
            <person name="Davis M.J."/>
            <person name="Wilming L.G."/>
            <person name="Aidinis V."/>
            <person name="Allen J.E."/>
            <person name="Ambesi-Impiombato A."/>
            <person name="Apweiler R."/>
            <person name="Aturaliya R.N."/>
            <person name="Bailey T.L."/>
            <person name="Bansal M."/>
            <person name="Baxter L."/>
            <person name="Beisel K.W."/>
            <person name="Bersano T."/>
            <person name="Bono H."/>
            <person name="Chalk A.M."/>
            <person name="Chiu K.P."/>
            <person name="Choudhary V."/>
            <person name="Christoffels A."/>
            <person name="Clutterbuck D.R."/>
            <person name="Crowe M.L."/>
            <person name="Dalla E."/>
            <person name="Dalrymple B.P."/>
            <person name="de Bono B."/>
            <person name="Della Gatta G."/>
            <person name="di Bernardo D."/>
            <person name="Down T."/>
            <person name="Engstrom P."/>
            <person name="Fagiolini M."/>
            <person name="Faulkner G."/>
            <person name="Fletcher C.F."/>
            <person name="Fukushima T."/>
            <person name="Furuno M."/>
            <person name="Futaki S."/>
            <person name="Gariboldi M."/>
            <person name="Georgii-Hemming P."/>
            <person name="Gingeras T.R."/>
            <person name="Gojobori T."/>
            <person name="Green R.E."/>
            <person name="Gustincich S."/>
            <person name="Harbers M."/>
            <person name="Hayashi Y."/>
            <person name="Hensch T.K."/>
            <person name="Hirokawa N."/>
            <person name="Hill D."/>
            <person name="Huminiecki L."/>
            <person name="Iacono M."/>
            <person name="Ikeo K."/>
            <person name="Iwama A."/>
            <person name="Ishikawa T."/>
            <person name="Jakt M."/>
            <person name="Kanapin A."/>
            <person name="Katoh M."/>
            <person name="Kawasawa Y."/>
            <person name="Kelso J."/>
            <person name="Kitamura H."/>
            <person name="Kitano H."/>
            <person name="Kollias G."/>
            <person name="Krishnan S.P."/>
            <person name="Kruger A."/>
            <person name="Kummerfeld S.K."/>
            <person name="Kurochkin I.V."/>
            <person name="Lareau L.F."/>
            <person name="Lazarevic D."/>
            <person name="Lipovich L."/>
            <person name="Liu J."/>
            <person name="Liuni S."/>
            <person name="McWilliam S."/>
            <person name="Madan Babu M."/>
            <person name="Madera M."/>
            <person name="Marchionni L."/>
            <person name="Matsuda H."/>
            <person name="Matsuzawa S."/>
            <person name="Miki H."/>
            <person name="Mignone F."/>
            <person name="Miyake S."/>
            <person name="Morris K."/>
            <person name="Mottagui-Tabar S."/>
            <person name="Mulder N."/>
            <person name="Nakano N."/>
            <person name="Nakauchi H."/>
            <person name="Ng P."/>
            <person name="Nilsson R."/>
            <person name="Nishiguchi S."/>
            <person name="Nishikawa S."/>
            <person name="Nori F."/>
            <person name="Ohara O."/>
            <person name="Okazaki Y."/>
            <person name="Orlando V."/>
            <person name="Pang K.C."/>
            <person name="Pavan W.J."/>
            <person name="Pavesi G."/>
            <person name="Pesole G."/>
            <person name="Petrovsky N."/>
            <person name="Piazza S."/>
            <person name="Reed J."/>
            <person name="Reid J.F."/>
            <person name="Ring B.Z."/>
            <person name="Ringwald M."/>
            <person name="Rost B."/>
            <person name="Ruan Y."/>
            <person name="Salzberg S.L."/>
            <person name="Sandelin A."/>
            <person name="Schneider C."/>
            <person name="Schoenbach C."/>
            <person name="Sekiguchi K."/>
            <person name="Semple C.A."/>
            <person name="Seno S."/>
            <person name="Sessa L."/>
            <person name="Sheng Y."/>
            <person name="Shibata Y."/>
            <person name="Shimada H."/>
            <person name="Shimada K."/>
            <person name="Silva D."/>
            <person name="Sinclair B."/>
            <person name="Sperling S."/>
            <person name="Stupka E."/>
            <person name="Sugiura K."/>
            <person name="Sultana R."/>
            <person name="Takenaka Y."/>
            <person name="Taki K."/>
            <person name="Tammoja K."/>
            <person name="Tan S.L."/>
            <person name="Tang S."/>
            <person name="Taylor M.S."/>
            <person name="Tegner J."/>
            <person name="Teichmann S.A."/>
            <person name="Ueda H.R."/>
            <person name="van Nimwegen E."/>
            <person name="Verardo R."/>
            <person name="Wei C.L."/>
            <person name="Yagi K."/>
            <person name="Yamanishi H."/>
            <person name="Zabarovsky E."/>
            <person name="Zhu S."/>
            <person name="Zimmer A."/>
            <person name="Hide W."/>
            <person name="Bult C."/>
            <person name="Grimmond S.M."/>
            <person name="Teasdale R.D."/>
            <person name="Liu E.T."/>
            <person name="Brusic V."/>
            <person name="Quackenbush J."/>
            <person name="Wahlestedt C."/>
            <person name="Mattick J.S."/>
            <person name="Hume D.A."/>
            <person name="Kai C."/>
            <person name="Sasaki D."/>
            <person name="Tomaru Y."/>
            <person name="Fukuda S."/>
            <person name="Kanamori-Katayama M."/>
            <person name="Suzuki M."/>
            <person name="Aoki J."/>
            <person name="Arakawa T."/>
            <person name="Iida J."/>
            <person name="Imamura K."/>
            <person name="Itoh M."/>
            <person name="Kato T."/>
            <person name="Kawaji H."/>
            <person name="Kawagashira N."/>
            <person name="Kawashima T."/>
            <person name="Kojima M."/>
            <person name="Kondo S."/>
            <person name="Konno H."/>
            <person name="Nakano K."/>
            <person name="Ninomiya N."/>
            <person name="Nishio T."/>
            <person name="Okada M."/>
            <person name="Plessy C."/>
            <person name="Shibata K."/>
            <person name="Shiraki T."/>
            <person name="Suzuki S."/>
            <person name="Tagami M."/>
            <person name="Waki K."/>
            <person name="Watahiki A."/>
            <person name="Okamura-Oho Y."/>
            <person name="Suzuki H."/>
            <person name="Kawai J."/>
            <person name="Hayashizaki Y."/>
        </authorList>
    </citation>
    <scope>NUCLEOTIDE SEQUENCE [LARGE SCALE MRNA] (ISOFORM 2)</scope>
    <source>
        <strain>C57BL/6J</strain>
        <tissue>Cerebellum</tissue>
        <tissue>Embryo</tissue>
        <tissue>Liver</tissue>
    </source>
</reference>
<reference key="2">
    <citation type="journal article" date="2009" name="PLoS Biol.">
        <title>Lineage-specific biology revealed by a finished genome assembly of the mouse.</title>
        <authorList>
            <person name="Church D.M."/>
            <person name="Goodstadt L."/>
            <person name="Hillier L.W."/>
            <person name="Zody M.C."/>
            <person name="Goldstein S."/>
            <person name="She X."/>
            <person name="Bult C.J."/>
            <person name="Agarwala R."/>
            <person name="Cherry J.L."/>
            <person name="DiCuccio M."/>
            <person name="Hlavina W."/>
            <person name="Kapustin Y."/>
            <person name="Meric P."/>
            <person name="Maglott D."/>
            <person name="Birtle Z."/>
            <person name="Marques A.C."/>
            <person name="Graves T."/>
            <person name="Zhou S."/>
            <person name="Teague B."/>
            <person name="Potamousis K."/>
            <person name="Churas C."/>
            <person name="Place M."/>
            <person name="Herschleb J."/>
            <person name="Runnheim R."/>
            <person name="Forrest D."/>
            <person name="Amos-Landgraf J."/>
            <person name="Schwartz D.C."/>
            <person name="Cheng Z."/>
            <person name="Lindblad-Toh K."/>
            <person name="Eichler E.E."/>
            <person name="Ponting C.P."/>
        </authorList>
    </citation>
    <scope>NUCLEOTIDE SEQUENCE [LARGE SCALE GENOMIC DNA]</scope>
    <source>
        <strain>C57BL/6J</strain>
    </source>
</reference>
<reference key="3">
    <citation type="submission" date="2005-09" db="EMBL/GenBank/DDBJ databases">
        <authorList>
            <person name="Mural R.J."/>
            <person name="Adams M.D."/>
            <person name="Myers E.W."/>
            <person name="Smith H.O."/>
            <person name="Venter J.C."/>
        </authorList>
    </citation>
    <scope>NUCLEOTIDE SEQUENCE [LARGE SCALE GENOMIC DNA]</scope>
</reference>
<reference key="4">
    <citation type="journal article" date="2004" name="Genome Res.">
        <title>The status, quality, and expansion of the NIH full-length cDNA project: the Mammalian Gene Collection (MGC).</title>
        <authorList>
            <consortium name="The MGC Project Team"/>
        </authorList>
    </citation>
    <scope>NUCLEOTIDE SEQUENCE [LARGE SCALE MRNA] (ISOFORM 2)</scope>
    <source>
        <tissue>Brain</tissue>
    </source>
</reference>
<comment type="subunit">
    <text evidence="1">Component of a nucleolar TRAMP-like complex, an ATP-dependent exosome regulatory complex consisting of a helicase (MTREX), an oligadenylate polymerase (TENT4B or TENT4A), and a substrate specific RNA-binding factor (ZCCHC7 or ZCCHC8). Several TRAMP-like complexes exist with specific compositions and are associated with nuclear, or nucleolar RNA exosomes (By similarity).</text>
</comment>
<comment type="subcellular location">
    <subcellularLocation>
        <location evidence="1">Nucleus</location>
        <location evidence="1">Nucleolus</location>
    </subcellularLocation>
</comment>
<comment type="alternative products">
    <event type="alternative splicing"/>
    <isoform>
        <id>B1AX39-1</id>
        <name>1</name>
        <sequence type="displayed"/>
    </isoform>
    <isoform>
        <id>B1AX39-3</id>
        <name>2</name>
        <sequence type="described" ref="VSP_036901 VSP_036902"/>
    </isoform>
</comment>
<comment type="sequence caution" evidence="7">
    <conflict type="miscellaneous discrepancy">
        <sequence resource="EMBL-CDS" id="AAI17021"/>
    </conflict>
    <text>Probable cloning artifact.</text>
</comment>
<comment type="sequence caution" evidence="7">
    <conflict type="miscellaneous discrepancy">
        <sequence resource="EMBL-CDS" id="AAI17023"/>
    </conflict>
    <text>Probable cloning artifact.</text>
</comment>
<comment type="sequence caution" evidence="7">
    <conflict type="miscellaneous discrepancy">
        <sequence resource="EMBL-CDS" id="AAI44775"/>
    </conflict>
    <text>Probable cloning artifact.</text>
</comment>
<comment type="sequence caution" evidence="7">
    <conflict type="miscellaneous discrepancy">
        <sequence resource="EMBL-CDS" id="BAC31499"/>
    </conflict>
    <text>Probable cloning artifact.</text>
</comment>
<comment type="sequence caution" evidence="7">
    <conflict type="miscellaneous discrepancy">
        <sequence resource="EMBL-CDS" id="BAE34173"/>
    </conflict>
    <text>Probable cloning artifact.</text>
</comment>
<feature type="chain" id="PRO_0000370241" description="Zinc finger CCHC domain-containing protein 7">
    <location>
        <begin position="1"/>
        <end position="541"/>
    </location>
</feature>
<feature type="zinc finger region" description="CCHC-type 1" evidence="3">
    <location>
        <begin position="236"/>
        <end position="253"/>
    </location>
</feature>
<feature type="zinc finger region" description="CCHC-type 2" evidence="3">
    <location>
        <begin position="258"/>
        <end position="275"/>
    </location>
</feature>
<feature type="zinc finger region" description="CCHC-type 3" evidence="3">
    <location>
        <begin position="299"/>
        <end position="316"/>
    </location>
</feature>
<feature type="zinc finger region" description="CCHC-type 4" evidence="3">
    <location>
        <begin position="343"/>
        <end position="360"/>
    </location>
</feature>
<feature type="region of interest" description="Disordered" evidence="4">
    <location>
        <begin position="111"/>
        <end position="144"/>
    </location>
</feature>
<feature type="region of interest" description="Disordered" evidence="4">
    <location>
        <begin position="394"/>
        <end position="541"/>
    </location>
</feature>
<feature type="compositionally biased region" description="Polar residues" evidence="4">
    <location>
        <begin position="116"/>
        <end position="126"/>
    </location>
</feature>
<feature type="compositionally biased region" description="Basic residues" evidence="4">
    <location>
        <begin position="418"/>
        <end position="434"/>
    </location>
</feature>
<feature type="compositionally biased region" description="Basic and acidic residues" evidence="4">
    <location>
        <begin position="435"/>
        <end position="452"/>
    </location>
</feature>
<feature type="compositionally biased region" description="Polar residues" evidence="4">
    <location>
        <begin position="474"/>
        <end position="486"/>
    </location>
</feature>
<feature type="compositionally biased region" description="Basic residues" evidence="4">
    <location>
        <begin position="487"/>
        <end position="497"/>
    </location>
</feature>
<feature type="compositionally biased region" description="Basic and acidic residues" evidence="4">
    <location>
        <begin position="498"/>
        <end position="509"/>
    </location>
</feature>
<feature type="compositionally biased region" description="Basic and acidic residues" evidence="4">
    <location>
        <begin position="517"/>
        <end position="527"/>
    </location>
</feature>
<feature type="compositionally biased region" description="Basic residues" evidence="4">
    <location>
        <begin position="530"/>
        <end position="541"/>
    </location>
</feature>
<feature type="modified residue" description="Phosphoserine" evidence="2">
    <location>
        <position position="477"/>
    </location>
</feature>
<feature type="cross-link" description="Glycyl lysine isopeptide (Lys-Gly) (interchain with G-Cter in SUMO2)" evidence="2">
    <location>
        <position position="129"/>
    </location>
</feature>
<feature type="cross-link" description="Glycyl lysine isopeptide (Lys-Gly) (interchain with G-Cter in SUMO2)" evidence="2">
    <location>
        <position position="136"/>
    </location>
</feature>
<feature type="cross-link" description="Glycyl lysine isopeptide (Lys-Gly) (interchain with G-Cter in SUMO2)" evidence="2">
    <location>
        <position position="138"/>
    </location>
</feature>
<feature type="cross-link" description="Glycyl lysine isopeptide (Lys-Gly) (interchain with G-Cter in SUMO2)" evidence="2">
    <location>
        <position position="234"/>
    </location>
</feature>
<feature type="cross-link" description="Glycyl lysine isopeptide (Lys-Gly) (interchain with G-Cter in SUMO2)" evidence="2">
    <location>
        <position position="249"/>
    </location>
</feature>
<feature type="cross-link" description="Glycyl lysine isopeptide (Lys-Gly) (interchain with G-Cter in SUMO2)" evidence="2">
    <location>
        <position position="334"/>
    </location>
</feature>
<feature type="cross-link" description="Glycyl lysine isopeptide (Lys-Gly) (interchain with G-Cter in SUMO2)" evidence="2">
    <location>
        <position position="408"/>
    </location>
</feature>
<feature type="cross-link" description="Glycyl lysine isopeptide (Lys-Gly) (interchain with G-Cter in SUMO2)" evidence="2">
    <location>
        <position position="431"/>
    </location>
</feature>
<feature type="cross-link" description="Glycyl lysine isopeptide (Lys-Gly) (interchain with G-Cter in SUMO2)" evidence="2">
    <location>
        <position position="473"/>
    </location>
</feature>
<feature type="cross-link" description="Glycyl lysine isopeptide (Lys-Gly) (interchain with G-Cter in SUMO2)" evidence="2">
    <location>
        <position position="484"/>
    </location>
</feature>
<feature type="cross-link" description="Glycyl lysine isopeptide (Lys-Gly) (interchain with G-Cter in SUMO2)" evidence="2">
    <location>
        <position position="487"/>
    </location>
</feature>
<feature type="cross-link" description="Glycyl lysine isopeptide (Lys-Gly) (interchain with G-Cter in SUMO2)" evidence="2">
    <location>
        <position position="530"/>
    </location>
</feature>
<feature type="splice variant" id="VSP_036901" description="In isoform 2." evidence="5 6">
    <location>
        <begin position="1"/>
        <end position="321"/>
    </location>
</feature>
<feature type="splice variant" id="VSP_036902" description="In isoform 2." evidence="5 6">
    <original>HLT</original>
    <variation>MLQ</variation>
    <location>
        <begin position="322"/>
        <end position="324"/>
    </location>
</feature>
<keyword id="KW-0025">Alternative splicing</keyword>
<keyword id="KW-1017">Isopeptide bond</keyword>
<keyword id="KW-0479">Metal-binding</keyword>
<keyword id="KW-0539">Nucleus</keyword>
<keyword id="KW-0597">Phosphoprotein</keyword>
<keyword id="KW-1185">Reference proteome</keyword>
<keyword id="KW-0677">Repeat</keyword>
<keyword id="KW-0832">Ubl conjugation</keyword>
<keyword id="KW-0862">Zinc</keyword>
<keyword id="KW-0863">Zinc-finger</keyword>